<feature type="chain" id="PRO_0000169505" description="Uncharacterized protein YrdB">
    <location>
        <begin position="1"/>
        <end position="85"/>
    </location>
</feature>
<feature type="sequence conflict" description="In Ref. 2; AAP18584." evidence="1" ref="2">
    <original>D</original>
    <variation>E</variation>
    <location>
        <position position="68"/>
    </location>
</feature>
<evidence type="ECO:0000305" key="1"/>
<organism>
    <name type="scientific">Shigella flexneri</name>
    <dbReference type="NCBI Taxonomy" id="623"/>
    <lineage>
        <taxon>Bacteria</taxon>
        <taxon>Pseudomonadati</taxon>
        <taxon>Pseudomonadota</taxon>
        <taxon>Gammaproteobacteria</taxon>
        <taxon>Enterobacterales</taxon>
        <taxon>Enterobacteriaceae</taxon>
        <taxon>Shigella</taxon>
    </lineage>
</organism>
<accession>Q83JD2</accession>
<sequence>MNQAIQFPDREEWDENKKCVCFPALVNGMQLTCAISGESLAYRFTGDTPEQWLASFRQHRWDLEEEADNLIQEQSEDDQGWVWLP</sequence>
<proteinExistence type="predicted"/>
<name>YRDB_SHIFL</name>
<gene>
    <name type="primary">yrdB</name>
    <name type="ordered locus">SF3312</name>
    <name type="ordered locus">S3536</name>
</gene>
<keyword id="KW-1185">Reference proteome</keyword>
<reference key="1">
    <citation type="journal article" date="2002" name="Nucleic Acids Res.">
        <title>Genome sequence of Shigella flexneri 2a: insights into pathogenicity through comparison with genomes of Escherichia coli K12 and O157.</title>
        <authorList>
            <person name="Jin Q."/>
            <person name="Yuan Z."/>
            <person name="Xu J."/>
            <person name="Wang Y."/>
            <person name="Shen Y."/>
            <person name="Lu W."/>
            <person name="Wang J."/>
            <person name="Liu H."/>
            <person name="Yang J."/>
            <person name="Yang F."/>
            <person name="Zhang X."/>
            <person name="Zhang J."/>
            <person name="Yang G."/>
            <person name="Wu H."/>
            <person name="Qu D."/>
            <person name="Dong J."/>
            <person name="Sun L."/>
            <person name="Xue Y."/>
            <person name="Zhao A."/>
            <person name="Gao Y."/>
            <person name="Zhu J."/>
            <person name="Kan B."/>
            <person name="Ding K."/>
            <person name="Chen S."/>
            <person name="Cheng H."/>
            <person name="Yao Z."/>
            <person name="He B."/>
            <person name="Chen R."/>
            <person name="Ma D."/>
            <person name="Qiang B."/>
            <person name="Wen Y."/>
            <person name="Hou Y."/>
            <person name="Yu J."/>
        </authorList>
    </citation>
    <scope>NUCLEOTIDE SEQUENCE [LARGE SCALE GENOMIC DNA]</scope>
    <source>
        <strain>301 / Serotype 2a</strain>
    </source>
</reference>
<reference key="2">
    <citation type="journal article" date="2003" name="Infect. Immun.">
        <title>Complete genome sequence and comparative genomics of Shigella flexneri serotype 2a strain 2457T.</title>
        <authorList>
            <person name="Wei J."/>
            <person name="Goldberg M.B."/>
            <person name="Burland V."/>
            <person name="Venkatesan M.M."/>
            <person name="Deng W."/>
            <person name="Fournier G."/>
            <person name="Mayhew G.F."/>
            <person name="Plunkett G. III"/>
            <person name="Rose D.J."/>
            <person name="Darling A."/>
            <person name="Mau B."/>
            <person name="Perna N.T."/>
            <person name="Payne S.M."/>
            <person name="Runyen-Janecky L.J."/>
            <person name="Zhou S."/>
            <person name="Schwartz D.C."/>
            <person name="Blattner F.R."/>
        </authorList>
    </citation>
    <scope>NUCLEOTIDE SEQUENCE [LARGE SCALE GENOMIC DNA]</scope>
    <source>
        <strain>ATCC 700930 / 2457T / Serotype 2a</strain>
    </source>
</reference>
<protein>
    <recommendedName>
        <fullName>Uncharacterized protein YrdB</fullName>
    </recommendedName>
</protein>
<dbReference type="EMBL" id="AE005674">
    <property type="protein sequence ID" value="AAN44775.1"/>
    <property type="molecule type" value="Genomic_DNA"/>
</dbReference>
<dbReference type="EMBL" id="AE014073">
    <property type="protein sequence ID" value="AAP18584.1"/>
    <property type="molecule type" value="Genomic_DNA"/>
</dbReference>
<dbReference type="RefSeq" id="NP_709068.1">
    <property type="nucleotide sequence ID" value="NC_004337.2"/>
</dbReference>
<dbReference type="RefSeq" id="WP_001070560.1">
    <property type="nucleotide sequence ID" value="NZ_CP123365.1"/>
</dbReference>
<dbReference type="SMR" id="Q83JD2"/>
<dbReference type="STRING" id="198214.SF3312"/>
<dbReference type="PaxDb" id="198214-SF3312"/>
<dbReference type="GeneID" id="1027050"/>
<dbReference type="KEGG" id="sfl:SF3312"/>
<dbReference type="KEGG" id="sfx:S3536"/>
<dbReference type="PATRIC" id="fig|198214.7.peg.3921"/>
<dbReference type="HOGENOM" id="CLU_190004_1_0_6"/>
<dbReference type="Proteomes" id="UP000001006">
    <property type="component" value="Chromosome"/>
</dbReference>
<dbReference type="Proteomes" id="UP000002673">
    <property type="component" value="Chromosome"/>
</dbReference>
<dbReference type="Gene3D" id="3.30.160.140">
    <property type="entry name" value="Shew3726-like"/>
    <property type="match status" value="1"/>
</dbReference>
<dbReference type="InterPro" id="IPR009962">
    <property type="entry name" value="DUF1488"/>
</dbReference>
<dbReference type="InterPro" id="IPR036692">
    <property type="entry name" value="Shew3726-like_sf"/>
</dbReference>
<dbReference type="Pfam" id="PF07369">
    <property type="entry name" value="DUF1488"/>
    <property type="match status" value="1"/>
</dbReference>
<dbReference type="SUPFAM" id="SSF160272">
    <property type="entry name" value="Shew3726-like"/>
    <property type="match status" value="1"/>
</dbReference>